<keyword id="KW-0010">Activator</keyword>
<keyword id="KW-0217">Developmental protein</keyword>
<keyword id="KW-0238">DNA-binding</keyword>
<keyword id="KW-0539">Nucleus</keyword>
<keyword id="KW-1185">Reference proteome</keyword>
<keyword id="KW-0804">Transcription</keyword>
<keyword id="KW-0805">Transcription regulation</keyword>
<evidence type="ECO:0000250" key="1">
    <source>
        <dbReference type="UniProtKB" id="Q61850"/>
    </source>
</evidence>
<evidence type="ECO:0000250" key="2">
    <source>
        <dbReference type="UniProtKB" id="Q99958"/>
    </source>
</evidence>
<evidence type="ECO:0000250" key="3">
    <source>
        <dbReference type="UniProtKB" id="Q9PVY9"/>
    </source>
</evidence>
<evidence type="ECO:0000255" key="4">
    <source>
        <dbReference type="PROSITE-ProRule" id="PRU00089"/>
    </source>
</evidence>
<evidence type="ECO:0000256" key="5">
    <source>
        <dbReference type="SAM" id="MobiDB-lite"/>
    </source>
</evidence>
<evidence type="ECO:0000305" key="6"/>
<evidence type="ECO:0000312" key="7">
    <source>
        <dbReference type="EMBL" id="AAH67916.1"/>
    </source>
</evidence>
<evidence type="ECO:0000312" key="8">
    <source>
        <dbReference type="EMBL" id="CAJ83766.1"/>
    </source>
</evidence>
<proteinExistence type="evidence at transcript level"/>
<sequence>MMQARYSVADPNALGVVPYLSEQNYYRAAGTYGSMATPMSVYPAHEQYTPGMARSYGPYHHHQPAAPKDLVKPPYSYIALITMAIQNAPDKKITLNGIYQFIMDRFPFYRENKQGWQNSIRHNLSLNECFVKVPRDDKKPGKGSYWTLDPDSYNMFENGSFLRRRRRFKKKDVSREKEDRILKDQGKVQGPIPSLELPKHDKKIVIKSESPELPVITKVENLSPDGGSAMQDSPRSVASTPSVSTENSIPDQHPASNGFSVENIMTLRTSPHGDLSPVPAVPCRTGMVPSLPINYTQTQSSVYSQACTQSMDTSGSYQCSMRAMSLYTGDRPSHMCAPSTLEEATSDHHNGTASPLNSMSLGSGQESVLTSSHHQQTATGGQTAAPWYLNPGADISHLSGHNFGSQQQTFPNVREMFNSHRLGIESSALSEHQVSGNTSCQIPYRSAPSIYRHSSPYAYDCTKY</sequence>
<gene>
    <name evidence="7" type="primary">foxc2</name>
    <name type="ORF">TGas062l07.1</name>
</gene>
<organism>
    <name type="scientific">Xenopus tropicalis</name>
    <name type="common">Western clawed frog</name>
    <name type="synonym">Silurana tropicalis</name>
    <dbReference type="NCBI Taxonomy" id="8364"/>
    <lineage>
        <taxon>Eukaryota</taxon>
        <taxon>Metazoa</taxon>
        <taxon>Chordata</taxon>
        <taxon>Craniata</taxon>
        <taxon>Vertebrata</taxon>
        <taxon>Euteleostomi</taxon>
        <taxon>Amphibia</taxon>
        <taxon>Batrachia</taxon>
        <taxon>Anura</taxon>
        <taxon>Pipoidea</taxon>
        <taxon>Pipidae</taxon>
        <taxon>Xenopodinae</taxon>
        <taxon>Xenopus</taxon>
        <taxon>Silurana</taxon>
    </lineage>
</organism>
<comment type="function">
    <text evidence="1 3">Transcriptional activator (By similarity). May be involved in the dorso-ventral patterning of the mesoderm (By similarity).</text>
</comment>
<comment type="subcellular location">
    <subcellularLocation>
        <location evidence="2">Nucleus</location>
    </subcellularLocation>
</comment>
<comment type="sequence caution" evidence="6">
    <conflict type="erroneous initiation">
        <sequence resource="EMBL-CDS" id="AAH67916"/>
    </conflict>
</comment>
<comment type="sequence caution" evidence="6">
    <conflict type="erroneous initiation">
        <sequence resource="EMBL-CDS" id="CAJ83766"/>
    </conflict>
</comment>
<feature type="chain" id="PRO_0000250440" description="Forkhead box protein C2">
    <location>
        <begin position="1"/>
        <end position="464"/>
    </location>
</feature>
<feature type="DNA-binding region" description="Fork-head" evidence="4">
    <location>
        <begin position="72"/>
        <end position="166"/>
    </location>
</feature>
<feature type="region of interest" description="Disordered" evidence="5">
    <location>
        <begin position="168"/>
        <end position="196"/>
    </location>
</feature>
<feature type="region of interest" description="Disordered" evidence="5">
    <location>
        <begin position="220"/>
        <end position="258"/>
    </location>
</feature>
<feature type="region of interest" description="Disordered" evidence="5">
    <location>
        <begin position="341"/>
        <end position="366"/>
    </location>
</feature>
<feature type="compositionally biased region" description="Basic and acidic residues" evidence="5">
    <location>
        <begin position="171"/>
        <end position="186"/>
    </location>
</feature>
<feature type="compositionally biased region" description="Polar residues" evidence="5">
    <location>
        <begin position="230"/>
        <end position="258"/>
    </location>
</feature>
<feature type="compositionally biased region" description="Polar residues" evidence="5">
    <location>
        <begin position="351"/>
        <end position="366"/>
    </location>
</feature>
<dbReference type="EMBL" id="CR762327">
    <property type="protein sequence ID" value="CAJ83766.1"/>
    <property type="status" value="ALT_INIT"/>
    <property type="molecule type" value="mRNA"/>
</dbReference>
<dbReference type="EMBL" id="BC067916">
    <property type="protein sequence ID" value="AAH67916.1"/>
    <property type="status" value="ALT_INIT"/>
    <property type="molecule type" value="mRNA"/>
</dbReference>
<dbReference type="RefSeq" id="NP_998857.1">
    <property type="nucleotide sequence ID" value="NM_213692.1"/>
</dbReference>
<dbReference type="SMR" id="Q6NVT7"/>
<dbReference type="FunCoup" id="Q6NVT7">
    <property type="interactions" value="892"/>
</dbReference>
<dbReference type="STRING" id="8364.ENSXETP00000001215"/>
<dbReference type="PaxDb" id="8364-ENSXETP00000035768"/>
<dbReference type="DNASU" id="407875"/>
<dbReference type="GeneID" id="407875"/>
<dbReference type="KEGG" id="xtr:407875"/>
<dbReference type="AGR" id="Xenbase:XB-GENE-481382"/>
<dbReference type="CTD" id="2303"/>
<dbReference type="Xenbase" id="XB-GENE-481382">
    <property type="gene designation" value="foxc2"/>
</dbReference>
<dbReference type="eggNOG" id="KOG2294">
    <property type="taxonomic scope" value="Eukaryota"/>
</dbReference>
<dbReference type="HOGENOM" id="CLU_035722_3_1_1"/>
<dbReference type="InParanoid" id="Q6NVT7"/>
<dbReference type="OrthoDB" id="5954824at2759"/>
<dbReference type="TreeFam" id="TF316127"/>
<dbReference type="Proteomes" id="UP000008143">
    <property type="component" value="Chromosome 4"/>
</dbReference>
<dbReference type="GO" id="GO:0005634">
    <property type="term" value="C:nucleus"/>
    <property type="evidence" value="ECO:0007669"/>
    <property type="project" value="UniProtKB-SubCell"/>
</dbReference>
<dbReference type="GO" id="GO:0031490">
    <property type="term" value="F:chromatin DNA binding"/>
    <property type="evidence" value="ECO:0000250"/>
    <property type="project" value="UniProtKB"/>
</dbReference>
<dbReference type="GO" id="GO:0001216">
    <property type="term" value="F:DNA-binding transcription activator activity"/>
    <property type="evidence" value="ECO:0000250"/>
    <property type="project" value="UniProtKB"/>
</dbReference>
<dbReference type="GO" id="GO:0003700">
    <property type="term" value="F:DNA-binding transcription factor activity"/>
    <property type="evidence" value="ECO:0000250"/>
    <property type="project" value="UniProtKB"/>
</dbReference>
<dbReference type="GO" id="GO:1990841">
    <property type="term" value="F:promoter-specific chromatin binding"/>
    <property type="evidence" value="ECO:0000250"/>
    <property type="project" value="UniProtKB"/>
</dbReference>
<dbReference type="GO" id="GO:0043565">
    <property type="term" value="F:sequence-specific DNA binding"/>
    <property type="evidence" value="ECO:0000250"/>
    <property type="project" value="UniProtKB"/>
</dbReference>
<dbReference type="GO" id="GO:0008286">
    <property type="term" value="P:insulin receptor signaling pathway"/>
    <property type="evidence" value="ECO:0000250"/>
    <property type="project" value="UniProtKB"/>
</dbReference>
<dbReference type="GO" id="GO:0001946">
    <property type="term" value="P:lymphangiogenesis"/>
    <property type="evidence" value="ECO:0000250"/>
    <property type="project" value="UniProtKB"/>
</dbReference>
<dbReference type="GO" id="GO:0007498">
    <property type="term" value="P:mesoderm development"/>
    <property type="evidence" value="ECO:0000250"/>
    <property type="project" value="UniProtKB"/>
</dbReference>
<dbReference type="GO" id="GO:0045893">
    <property type="term" value="P:positive regulation of DNA-templated transcription"/>
    <property type="evidence" value="ECO:0000250"/>
    <property type="project" value="UniProtKB"/>
</dbReference>
<dbReference type="GO" id="GO:0045944">
    <property type="term" value="P:positive regulation of transcription by RNA polymerase II"/>
    <property type="evidence" value="ECO:0000250"/>
    <property type="project" value="UniProtKB"/>
</dbReference>
<dbReference type="GO" id="GO:0009725">
    <property type="term" value="P:response to hormone"/>
    <property type="evidence" value="ECO:0000250"/>
    <property type="project" value="UniProtKB"/>
</dbReference>
<dbReference type="CDD" id="cd20044">
    <property type="entry name" value="FH_FOXC1"/>
    <property type="match status" value="1"/>
</dbReference>
<dbReference type="FunFam" id="1.10.10.10:FF:000016">
    <property type="entry name" value="Forkhead box protein I1"/>
    <property type="match status" value="1"/>
</dbReference>
<dbReference type="Gene3D" id="1.10.10.10">
    <property type="entry name" value="Winged helix-like DNA-binding domain superfamily/Winged helix DNA-binding domain"/>
    <property type="match status" value="1"/>
</dbReference>
<dbReference type="InterPro" id="IPR001766">
    <property type="entry name" value="Fork_head_dom"/>
</dbReference>
<dbReference type="InterPro" id="IPR050211">
    <property type="entry name" value="FOX_domain-containing"/>
</dbReference>
<dbReference type="InterPro" id="IPR047391">
    <property type="entry name" value="FOXC1/C2-like_FH"/>
</dbReference>
<dbReference type="InterPro" id="IPR018122">
    <property type="entry name" value="TF_fork_head_CS_1"/>
</dbReference>
<dbReference type="InterPro" id="IPR030456">
    <property type="entry name" value="TF_fork_head_CS_2"/>
</dbReference>
<dbReference type="InterPro" id="IPR036388">
    <property type="entry name" value="WH-like_DNA-bd_sf"/>
</dbReference>
<dbReference type="InterPro" id="IPR036390">
    <property type="entry name" value="WH_DNA-bd_sf"/>
</dbReference>
<dbReference type="PANTHER" id="PTHR11829">
    <property type="entry name" value="FORKHEAD BOX PROTEIN"/>
    <property type="match status" value="1"/>
</dbReference>
<dbReference type="PANTHER" id="PTHR11829:SF68">
    <property type="entry name" value="FORKHEAD BOX PROTEIN C1"/>
    <property type="match status" value="1"/>
</dbReference>
<dbReference type="Pfam" id="PF00250">
    <property type="entry name" value="Forkhead"/>
    <property type="match status" value="1"/>
</dbReference>
<dbReference type="PRINTS" id="PR00053">
    <property type="entry name" value="FORKHEAD"/>
</dbReference>
<dbReference type="SMART" id="SM00339">
    <property type="entry name" value="FH"/>
    <property type="match status" value="1"/>
</dbReference>
<dbReference type="SUPFAM" id="SSF46785">
    <property type="entry name" value="Winged helix' DNA-binding domain"/>
    <property type="match status" value="1"/>
</dbReference>
<dbReference type="PROSITE" id="PS00657">
    <property type="entry name" value="FORK_HEAD_1"/>
    <property type="match status" value="1"/>
</dbReference>
<dbReference type="PROSITE" id="PS00658">
    <property type="entry name" value="FORK_HEAD_2"/>
    <property type="match status" value="1"/>
</dbReference>
<dbReference type="PROSITE" id="PS50039">
    <property type="entry name" value="FORK_HEAD_3"/>
    <property type="match status" value="1"/>
</dbReference>
<name>FOXC2_XENTR</name>
<protein>
    <recommendedName>
        <fullName>Forkhead box protein C2</fullName>
        <shortName>FoxC2</shortName>
    </recommendedName>
</protein>
<accession>Q6NVT7</accession>
<reference evidence="8" key="1">
    <citation type="submission" date="2006-06" db="EMBL/GenBank/DDBJ databases">
        <authorList>
            <consortium name="Sanger Xenopus tropicalis EST/cDNA project"/>
        </authorList>
    </citation>
    <scope>NUCLEOTIDE SEQUENCE [LARGE SCALE MRNA]</scope>
    <source>
        <tissue evidence="8">Gastrula</tissue>
    </source>
</reference>
<reference evidence="8" key="2">
    <citation type="submission" date="2004-03" db="EMBL/GenBank/DDBJ databases">
        <authorList>
            <consortium name="NIH - Xenopus Gene Collection (XGC) project"/>
        </authorList>
    </citation>
    <scope>NUCLEOTIDE SEQUENCE [LARGE SCALE MRNA]</scope>
    <source>
        <tissue evidence="8">Gastrula</tissue>
    </source>
</reference>